<dbReference type="EC" id="3.4.-.-" evidence="1"/>
<dbReference type="EMBL" id="AJ938182">
    <property type="protein sequence ID" value="CAI81609.1"/>
    <property type="molecule type" value="Genomic_DNA"/>
</dbReference>
<dbReference type="RefSeq" id="WP_001105699.1">
    <property type="nucleotide sequence ID" value="NC_007622.1"/>
</dbReference>
<dbReference type="MEROPS" id="C75.001"/>
<dbReference type="KEGG" id="sab:SAB1920"/>
<dbReference type="HOGENOM" id="CLU_098969_2_2_9"/>
<dbReference type="GO" id="GO:0005886">
    <property type="term" value="C:plasma membrane"/>
    <property type="evidence" value="ECO:0007669"/>
    <property type="project" value="UniProtKB-SubCell"/>
</dbReference>
<dbReference type="GO" id="GO:0008233">
    <property type="term" value="F:peptidase activity"/>
    <property type="evidence" value="ECO:0007669"/>
    <property type="project" value="UniProtKB-UniRule"/>
</dbReference>
<dbReference type="GO" id="GO:0006508">
    <property type="term" value="P:proteolysis"/>
    <property type="evidence" value="ECO:0007669"/>
    <property type="project" value="UniProtKB-KW"/>
</dbReference>
<dbReference type="GO" id="GO:0009372">
    <property type="term" value="P:quorum sensing"/>
    <property type="evidence" value="ECO:0007669"/>
    <property type="project" value="UniProtKB-UniRule"/>
</dbReference>
<dbReference type="HAMAP" id="MF_00784">
    <property type="entry name" value="AgrB"/>
    <property type="match status" value="1"/>
</dbReference>
<dbReference type="InterPro" id="IPR006741">
    <property type="entry name" value="AgrB"/>
</dbReference>
<dbReference type="Pfam" id="PF04647">
    <property type="entry name" value="AgrB"/>
    <property type="match status" value="1"/>
</dbReference>
<dbReference type="SMART" id="SM00793">
    <property type="entry name" value="AgrB"/>
    <property type="match status" value="1"/>
</dbReference>
<gene>
    <name evidence="1" type="primary">agrB</name>
    <name type="ordered locus">SAB1920</name>
</gene>
<comment type="function">
    <text evidence="1">Essential for the production of a quorum sensing system signal molecule, the autoinducing peptide (AIP). This quorum sensing system is responsible for the regulation of the expression of virulence factor genes. Involved in the proteolytic processing of AgrD, the precursor of AIP.</text>
</comment>
<comment type="subcellular location">
    <subcellularLocation>
        <location evidence="1">Cell membrane</location>
        <topology evidence="1">Multi-pass membrane protein</topology>
    </subcellularLocation>
</comment>
<comment type="similarity">
    <text evidence="1">Belongs to the AgrB family.</text>
</comment>
<organism>
    <name type="scientific">Staphylococcus aureus (strain bovine RF122 / ET3-1)</name>
    <dbReference type="NCBI Taxonomy" id="273036"/>
    <lineage>
        <taxon>Bacteria</taxon>
        <taxon>Bacillati</taxon>
        <taxon>Bacillota</taxon>
        <taxon>Bacilli</taxon>
        <taxon>Bacillales</taxon>
        <taxon>Staphylococcaceae</taxon>
        <taxon>Staphylococcus</taxon>
    </lineage>
</organism>
<keyword id="KW-1003">Cell membrane</keyword>
<keyword id="KW-0378">Hydrolase</keyword>
<keyword id="KW-0472">Membrane</keyword>
<keyword id="KW-0645">Protease</keyword>
<keyword id="KW-0673">Quorum sensing</keyword>
<keyword id="KW-0812">Transmembrane</keyword>
<keyword id="KW-1133">Transmembrane helix</keyword>
<keyword id="KW-0843">Virulence</keyword>
<sequence length="187" mass="21678">MNYFDNKIDQFATYLQKRNNLDHIQFLQVRLGMQIIVGNFLKILVTYSISIFLSVFLYTLVTHLSYMLIRYNAHGAHAKSSILCYIQSILIFVFVPYFLINIDINFTYLLALSIIGLISVVIYAPAATKKQPIPIKLVKRKKYVSIIMYLLVMILSLIIHPFYAQFMLLGILVESITLLPIFFPKED</sequence>
<proteinExistence type="inferred from homology"/>
<accession>Q2YUD1</accession>
<name>AGRB_STAAB</name>
<feature type="chain" id="PRO_1000046839" description="Accessory gene regulator protein B">
    <location>
        <begin position="1"/>
        <end position="187"/>
    </location>
</feature>
<feature type="transmembrane region" description="Helical" evidence="1">
    <location>
        <begin position="49"/>
        <end position="69"/>
    </location>
</feature>
<feature type="transmembrane region" description="Helical" evidence="1">
    <location>
        <begin position="82"/>
        <end position="102"/>
    </location>
</feature>
<feature type="transmembrane region" description="Helical" evidence="1">
    <location>
        <begin position="106"/>
        <end position="126"/>
    </location>
</feature>
<feature type="transmembrane region" description="Helical" evidence="1">
    <location>
        <begin position="144"/>
        <end position="164"/>
    </location>
</feature>
<feature type="transmembrane region" description="Helical" evidence="1">
    <location>
        <begin position="166"/>
        <end position="186"/>
    </location>
</feature>
<reference key="1">
    <citation type="journal article" date="2007" name="PLoS ONE">
        <title>Molecular correlates of host specialization in Staphylococcus aureus.</title>
        <authorList>
            <person name="Herron-Olson L."/>
            <person name="Fitzgerald J.R."/>
            <person name="Musser J.M."/>
            <person name="Kapur V."/>
        </authorList>
    </citation>
    <scope>NUCLEOTIDE SEQUENCE [LARGE SCALE GENOMIC DNA]</scope>
    <source>
        <strain>bovine RF122 / ET3-1</strain>
    </source>
</reference>
<evidence type="ECO:0000255" key="1">
    <source>
        <dbReference type="HAMAP-Rule" id="MF_00784"/>
    </source>
</evidence>
<protein>
    <recommendedName>
        <fullName evidence="1">Accessory gene regulator protein B</fullName>
        <ecNumber evidence="1">3.4.-.-</ecNumber>
    </recommendedName>
</protein>